<organism>
    <name type="scientific">Salmonella paratyphi A (strain AKU_12601)</name>
    <dbReference type="NCBI Taxonomy" id="554290"/>
    <lineage>
        <taxon>Bacteria</taxon>
        <taxon>Pseudomonadati</taxon>
        <taxon>Pseudomonadota</taxon>
        <taxon>Gammaproteobacteria</taxon>
        <taxon>Enterobacterales</taxon>
        <taxon>Enterobacteriaceae</taxon>
        <taxon>Salmonella</taxon>
    </lineage>
</organism>
<keyword id="KW-0963">Cytoplasm</keyword>
<keyword id="KW-0378">Hydrolase</keyword>
<proteinExistence type="inferred from homology"/>
<protein>
    <recommendedName>
        <fullName evidence="1">Probable L-ascorbate-6-phosphate lactonase UlaG</fullName>
        <ecNumber evidence="1">3.1.1.-</ecNumber>
    </recommendedName>
    <alternativeName>
        <fullName evidence="1">L-ascorbate utilization protein G</fullName>
    </alternativeName>
</protein>
<sequence>MSKVQSITRESWILSTFPEWGSWLNEEIEQEQVAPGTFAMWWLGCTGIWLKSEGGTNVCVDFWCGTGKQSHGNPLMKTGHQMQRMAGVKKLQPNLRTTPFVLDPFAIRQIDAVLATHDHNDHIDVNVAAAVMQNCADDVPFIGPQTCVDLWVGWGVPKERCIVVKPGDVVKVKDIEIHALDAFDRTALITLPADQKAAGVLPDGMDVRAVNYLFKTPGGNLYHSGDSHYSNYYAKHGNEHQIDVALGSYGENPRGITDKMTSADILRMAESLNTKVVIPFHHDIWSNFQADPQEIRVLWEMKKDRLKYGFKPFIWQVGGKFTWPLDKDNFEYHYPRGFDDCFTIEPDLPFKSFL</sequence>
<gene>
    <name evidence="1" type="primary">ulaG</name>
    <name type="ordered locus">SSPA3899</name>
</gene>
<dbReference type="EC" id="3.1.1.-" evidence="1"/>
<dbReference type="EMBL" id="FM200053">
    <property type="protein sequence ID" value="CAR62185.1"/>
    <property type="molecule type" value="Genomic_DNA"/>
</dbReference>
<dbReference type="RefSeq" id="WP_000049161.1">
    <property type="nucleotide sequence ID" value="NC_011147.1"/>
</dbReference>
<dbReference type="SMR" id="B5BKK0"/>
<dbReference type="GeneID" id="66758606"/>
<dbReference type="KEGG" id="sek:SSPA3899"/>
<dbReference type="HOGENOM" id="CLU_074775_0_0_6"/>
<dbReference type="UniPathway" id="UPA00263">
    <property type="reaction ID" value="UER00377"/>
</dbReference>
<dbReference type="Proteomes" id="UP000001869">
    <property type="component" value="Chromosome"/>
</dbReference>
<dbReference type="GO" id="GO:0005737">
    <property type="term" value="C:cytoplasm"/>
    <property type="evidence" value="ECO:0007669"/>
    <property type="project" value="UniProtKB-SubCell"/>
</dbReference>
<dbReference type="GO" id="GO:0035460">
    <property type="term" value="F:L-ascorbate 6-phosphate lactonase activity"/>
    <property type="evidence" value="ECO:0007669"/>
    <property type="project" value="InterPro"/>
</dbReference>
<dbReference type="GO" id="GO:0030145">
    <property type="term" value="F:manganese ion binding"/>
    <property type="evidence" value="ECO:0007669"/>
    <property type="project" value="InterPro"/>
</dbReference>
<dbReference type="GO" id="GO:0019854">
    <property type="term" value="P:L-ascorbic acid catabolic process"/>
    <property type="evidence" value="ECO:0007669"/>
    <property type="project" value="UniProtKB-UniRule"/>
</dbReference>
<dbReference type="CDD" id="cd16284">
    <property type="entry name" value="UlaG-like_MBL-fold"/>
    <property type="match status" value="1"/>
</dbReference>
<dbReference type="FunFam" id="3.60.15.10:FF:000004">
    <property type="entry name" value="Probable L-ascorbate-6-phosphate lactonase UlaG"/>
    <property type="match status" value="1"/>
</dbReference>
<dbReference type="Gene3D" id="3.60.15.10">
    <property type="entry name" value="Ribonuclease Z/Hydroxyacylglutathione hydrolase-like"/>
    <property type="match status" value="1"/>
</dbReference>
<dbReference type="HAMAP" id="MF_01266">
    <property type="entry name" value="UlaG"/>
    <property type="match status" value="1"/>
</dbReference>
<dbReference type="InterPro" id="IPR023951">
    <property type="entry name" value="L-ascorbate_6P_UlaG"/>
</dbReference>
<dbReference type="InterPro" id="IPR001279">
    <property type="entry name" value="Metallo-B-lactamas"/>
</dbReference>
<dbReference type="InterPro" id="IPR036866">
    <property type="entry name" value="RibonucZ/Hydroxyglut_hydro"/>
</dbReference>
<dbReference type="InterPro" id="IPR048021">
    <property type="entry name" value="UlaG-like_MBL-fold"/>
</dbReference>
<dbReference type="InterPro" id="IPR050114">
    <property type="entry name" value="UPF0173_UPF0282_UlaG_hydrolase"/>
</dbReference>
<dbReference type="NCBIfam" id="NF008688">
    <property type="entry name" value="PRK11709.1"/>
    <property type="match status" value="1"/>
</dbReference>
<dbReference type="PANTHER" id="PTHR43546:SF9">
    <property type="entry name" value="L-ASCORBATE-6-PHOSPHATE LACTONASE ULAG-RELATED"/>
    <property type="match status" value="1"/>
</dbReference>
<dbReference type="PANTHER" id="PTHR43546">
    <property type="entry name" value="UPF0173 METAL-DEPENDENT HYDROLASE MJ1163-RELATED"/>
    <property type="match status" value="1"/>
</dbReference>
<dbReference type="Pfam" id="PF12706">
    <property type="entry name" value="Lactamase_B_2"/>
    <property type="match status" value="1"/>
</dbReference>
<dbReference type="SUPFAM" id="SSF56281">
    <property type="entry name" value="Metallo-hydrolase/oxidoreductase"/>
    <property type="match status" value="1"/>
</dbReference>
<feature type="chain" id="PRO_1000140106" description="Probable L-ascorbate-6-phosphate lactonase UlaG">
    <location>
        <begin position="1"/>
        <end position="354"/>
    </location>
</feature>
<comment type="function">
    <text evidence="1">Probably catalyzes the hydrolysis of L-ascorbate-6-P into 3-keto-L-gulonate-6-P. Is essential for L-ascorbate utilization under anaerobic conditions.</text>
</comment>
<comment type="catalytic activity">
    <reaction evidence="1">
        <text>L-ascorbate 6-phosphate + H2O = 3-dehydro-L-gulonate 6-phosphate</text>
        <dbReference type="Rhea" id="RHEA:28803"/>
        <dbReference type="ChEBI" id="CHEBI:15377"/>
        <dbReference type="ChEBI" id="CHEBI:58774"/>
        <dbReference type="ChEBI" id="CHEBI:61698"/>
    </reaction>
</comment>
<comment type="cofactor">
    <cofactor evidence="1">
        <name>a divalent metal cation</name>
        <dbReference type="ChEBI" id="CHEBI:60240"/>
    </cofactor>
</comment>
<comment type="pathway">
    <text evidence="1">Cofactor degradation; L-ascorbate degradation; D-xylulose 5-phosphate from L-ascorbate: step 1/4.</text>
</comment>
<comment type="subcellular location">
    <subcellularLocation>
        <location evidence="1">Cytoplasm</location>
    </subcellularLocation>
</comment>
<comment type="induction">
    <text evidence="1">Induced by L-ascorbate. Repressed by UlaR.</text>
</comment>
<comment type="similarity">
    <text evidence="1">Belongs to the UlaG family.</text>
</comment>
<name>ULAG_SALPK</name>
<evidence type="ECO:0000255" key="1">
    <source>
        <dbReference type="HAMAP-Rule" id="MF_01266"/>
    </source>
</evidence>
<accession>B5BKK0</accession>
<reference key="1">
    <citation type="journal article" date="2009" name="BMC Genomics">
        <title>Pseudogene accumulation in the evolutionary histories of Salmonella enterica serovars Paratyphi A and Typhi.</title>
        <authorList>
            <person name="Holt K.E."/>
            <person name="Thomson N.R."/>
            <person name="Wain J."/>
            <person name="Langridge G.C."/>
            <person name="Hasan R."/>
            <person name="Bhutta Z.A."/>
            <person name="Quail M.A."/>
            <person name="Norbertczak H."/>
            <person name="Walker D."/>
            <person name="Simmonds M."/>
            <person name="White B."/>
            <person name="Bason N."/>
            <person name="Mungall K."/>
            <person name="Dougan G."/>
            <person name="Parkhill J."/>
        </authorList>
    </citation>
    <scope>NUCLEOTIDE SEQUENCE [LARGE SCALE GENOMIC DNA]</scope>
    <source>
        <strain>AKU_12601</strain>
    </source>
</reference>